<accession>Q3Z8Y0</accession>
<evidence type="ECO:0000255" key="1">
    <source>
        <dbReference type="HAMAP-Rule" id="MF_00176"/>
    </source>
</evidence>
<proteinExistence type="inferred from homology"/>
<protein>
    <recommendedName>
        <fullName evidence="1">Serine--tRNA ligase</fullName>
        <ecNumber evidence="1">6.1.1.11</ecNumber>
    </recommendedName>
    <alternativeName>
        <fullName evidence="1">Seryl-tRNA synthetase</fullName>
        <shortName evidence="1">SerRS</shortName>
    </alternativeName>
    <alternativeName>
        <fullName evidence="1">Seryl-tRNA(Ser/Sec) synthetase</fullName>
    </alternativeName>
</protein>
<comment type="function">
    <text evidence="1">Catalyzes the attachment of serine to tRNA(Ser). Is also able to aminoacylate tRNA(Sec) with serine, to form the misacylated tRNA L-seryl-tRNA(Sec), which will be further converted into selenocysteinyl-tRNA(Sec).</text>
</comment>
<comment type="catalytic activity">
    <reaction evidence="1">
        <text>tRNA(Ser) + L-serine + ATP = L-seryl-tRNA(Ser) + AMP + diphosphate + H(+)</text>
        <dbReference type="Rhea" id="RHEA:12292"/>
        <dbReference type="Rhea" id="RHEA-COMP:9669"/>
        <dbReference type="Rhea" id="RHEA-COMP:9703"/>
        <dbReference type="ChEBI" id="CHEBI:15378"/>
        <dbReference type="ChEBI" id="CHEBI:30616"/>
        <dbReference type="ChEBI" id="CHEBI:33019"/>
        <dbReference type="ChEBI" id="CHEBI:33384"/>
        <dbReference type="ChEBI" id="CHEBI:78442"/>
        <dbReference type="ChEBI" id="CHEBI:78533"/>
        <dbReference type="ChEBI" id="CHEBI:456215"/>
        <dbReference type="EC" id="6.1.1.11"/>
    </reaction>
</comment>
<comment type="catalytic activity">
    <reaction evidence="1">
        <text>tRNA(Sec) + L-serine + ATP = L-seryl-tRNA(Sec) + AMP + diphosphate + H(+)</text>
        <dbReference type="Rhea" id="RHEA:42580"/>
        <dbReference type="Rhea" id="RHEA-COMP:9742"/>
        <dbReference type="Rhea" id="RHEA-COMP:10128"/>
        <dbReference type="ChEBI" id="CHEBI:15378"/>
        <dbReference type="ChEBI" id="CHEBI:30616"/>
        <dbReference type="ChEBI" id="CHEBI:33019"/>
        <dbReference type="ChEBI" id="CHEBI:33384"/>
        <dbReference type="ChEBI" id="CHEBI:78442"/>
        <dbReference type="ChEBI" id="CHEBI:78533"/>
        <dbReference type="ChEBI" id="CHEBI:456215"/>
        <dbReference type="EC" id="6.1.1.11"/>
    </reaction>
</comment>
<comment type="pathway">
    <text evidence="1">Aminoacyl-tRNA biosynthesis; selenocysteinyl-tRNA(Sec) biosynthesis; L-seryl-tRNA(Sec) from L-serine and tRNA(Sec): step 1/1.</text>
</comment>
<comment type="subunit">
    <text evidence="1">Homodimer. The tRNA molecule binds across the dimer.</text>
</comment>
<comment type="subcellular location">
    <subcellularLocation>
        <location evidence="1">Cytoplasm</location>
    </subcellularLocation>
</comment>
<comment type="domain">
    <text evidence="1">Consists of two distinct domains, a catalytic core and a N-terminal extension that is involved in tRNA binding.</text>
</comment>
<comment type="similarity">
    <text evidence="1">Belongs to the class-II aminoacyl-tRNA synthetase family. Type-1 seryl-tRNA synthetase subfamily.</text>
</comment>
<dbReference type="EC" id="6.1.1.11" evidence="1"/>
<dbReference type="EMBL" id="CP000027">
    <property type="protein sequence ID" value="AAW40145.1"/>
    <property type="molecule type" value="Genomic_DNA"/>
</dbReference>
<dbReference type="RefSeq" id="WP_010936352.1">
    <property type="nucleotide sequence ID" value="NC_002936.3"/>
</dbReference>
<dbReference type="SMR" id="Q3Z8Y0"/>
<dbReference type="FunCoup" id="Q3Z8Y0">
    <property type="interactions" value="350"/>
</dbReference>
<dbReference type="STRING" id="243164.DET0577"/>
<dbReference type="GeneID" id="3230108"/>
<dbReference type="KEGG" id="det:DET0577"/>
<dbReference type="PATRIC" id="fig|243164.10.peg.554"/>
<dbReference type="eggNOG" id="COG0172">
    <property type="taxonomic scope" value="Bacteria"/>
</dbReference>
<dbReference type="HOGENOM" id="CLU_023797_1_1_0"/>
<dbReference type="InParanoid" id="Q3Z8Y0"/>
<dbReference type="UniPathway" id="UPA00906">
    <property type="reaction ID" value="UER00895"/>
</dbReference>
<dbReference type="Proteomes" id="UP000008289">
    <property type="component" value="Chromosome"/>
</dbReference>
<dbReference type="GO" id="GO:0005737">
    <property type="term" value="C:cytoplasm"/>
    <property type="evidence" value="ECO:0007669"/>
    <property type="project" value="UniProtKB-SubCell"/>
</dbReference>
<dbReference type="GO" id="GO:0005524">
    <property type="term" value="F:ATP binding"/>
    <property type="evidence" value="ECO:0007669"/>
    <property type="project" value="UniProtKB-UniRule"/>
</dbReference>
<dbReference type="GO" id="GO:0004828">
    <property type="term" value="F:serine-tRNA ligase activity"/>
    <property type="evidence" value="ECO:0007669"/>
    <property type="project" value="UniProtKB-UniRule"/>
</dbReference>
<dbReference type="GO" id="GO:0016260">
    <property type="term" value="P:selenocysteine biosynthetic process"/>
    <property type="evidence" value="ECO:0007669"/>
    <property type="project" value="UniProtKB-UniRule"/>
</dbReference>
<dbReference type="GO" id="GO:0006434">
    <property type="term" value="P:seryl-tRNA aminoacylation"/>
    <property type="evidence" value="ECO:0007669"/>
    <property type="project" value="UniProtKB-UniRule"/>
</dbReference>
<dbReference type="CDD" id="cd00770">
    <property type="entry name" value="SerRS_core"/>
    <property type="match status" value="1"/>
</dbReference>
<dbReference type="Gene3D" id="3.30.930.10">
    <property type="entry name" value="Bira Bifunctional Protein, Domain 2"/>
    <property type="match status" value="1"/>
</dbReference>
<dbReference type="Gene3D" id="1.10.287.40">
    <property type="entry name" value="Serine-tRNA synthetase, tRNA binding domain"/>
    <property type="match status" value="1"/>
</dbReference>
<dbReference type="HAMAP" id="MF_00176">
    <property type="entry name" value="Ser_tRNA_synth_type1"/>
    <property type="match status" value="1"/>
</dbReference>
<dbReference type="InterPro" id="IPR002314">
    <property type="entry name" value="aa-tRNA-synt_IIb"/>
</dbReference>
<dbReference type="InterPro" id="IPR006195">
    <property type="entry name" value="aa-tRNA-synth_II"/>
</dbReference>
<dbReference type="InterPro" id="IPR045864">
    <property type="entry name" value="aa-tRNA-synth_II/BPL/LPL"/>
</dbReference>
<dbReference type="InterPro" id="IPR002317">
    <property type="entry name" value="Ser-tRNA-ligase_type_1"/>
</dbReference>
<dbReference type="InterPro" id="IPR015866">
    <property type="entry name" value="Ser-tRNA-synth_1_N"/>
</dbReference>
<dbReference type="InterPro" id="IPR042103">
    <property type="entry name" value="SerRS_1_N_sf"/>
</dbReference>
<dbReference type="InterPro" id="IPR033729">
    <property type="entry name" value="SerRS_core"/>
</dbReference>
<dbReference type="InterPro" id="IPR010978">
    <property type="entry name" value="tRNA-bd_arm"/>
</dbReference>
<dbReference type="NCBIfam" id="TIGR00414">
    <property type="entry name" value="serS"/>
    <property type="match status" value="1"/>
</dbReference>
<dbReference type="PANTHER" id="PTHR43697:SF1">
    <property type="entry name" value="SERINE--TRNA LIGASE"/>
    <property type="match status" value="1"/>
</dbReference>
<dbReference type="PANTHER" id="PTHR43697">
    <property type="entry name" value="SERYL-TRNA SYNTHETASE"/>
    <property type="match status" value="1"/>
</dbReference>
<dbReference type="Pfam" id="PF02403">
    <property type="entry name" value="Seryl_tRNA_N"/>
    <property type="match status" value="1"/>
</dbReference>
<dbReference type="Pfam" id="PF00587">
    <property type="entry name" value="tRNA-synt_2b"/>
    <property type="match status" value="1"/>
</dbReference>
<dbReference type="PIRSF" id="PIRSF001529">
    <property type="entry name" value="Ser-tRNA-synth_IIa"/>
    <property type="match status" value="1"/>
</dbReference>
<dbReference type="PRINTS" id="PR00981">
    <property type="entry name" value="TRNASYNTHSER"/>
</dbReference>
<dbReference type="SUPFAM" id="SSF55681">
    <property type="entry name" value="Class II aaRS and biotin synthetases"/>
    <property type="match status" value="1"/>
</dbReference>
<dbReference type="SUPFAM" id="SSF46589">
    <property type="entry name" value="tRNA-binding arm"/>
    <property type="match status" value="1"/>
</dbReference>
<dbReference type="PROSITE" id="PS50862">
    <property type="entry name" value="AA_TRNA_LIGASE_II"/>
    <property type="match status" value="1"/>
</dbReference>
<feature type="chain" id="PRO_1000019666" description="Serine--tRNA ligase">
    <location>
        <begin position="1"/>
        <end position="413"/>
    </location>
</feature>
<feature type="binding site" evidence="1">
    <location>
        <begin position="221"/>
        <end position="223"/>
    </location>
    <ligand>
        <name>L-serine</name>
        <dbReference type="ChEBI" id="CHEBI:33384"/>
    </ligand>
</feature>
<feature type="binding site" evidence="1">
    <location>
        <begin position="252"/>
        <end position="254"/>
    </location>
    <ligand>
        <name>ATP</name>
        <dbReference type="ChEBI" id="CHEBI:30616"/>
    </ligand>
</feature>
<feature type="binding site" evidence="1">
    <location>
        <position position="275"/>
    </location>
    <ligand>
        <name>L-serine</name>
        <dbReference type="ChEBI" id="CHEBI:33384"/>
    </ligand>
</feature>
<feature type="binding site" evidence="1">
    <location>
        <begin position="339"/>
        <end position="342"/>
    </location>
    <ligand>
        <name>ATP</name>
        <dbReference type="ChEBI" id="CHEBI:30616"/>
    </ligand>
</feature>
<feature type="binding site" evidence="1">
    <location>
        <position position="375"/>
    </location>
    <ligand>
        <name>L-serine</name>
        <dbReference type="ChEBI" id="CHEBI:33384"/>
    </ligand>
</feature>
<sequence length="413" mass="47294">MLDLKFIRENTELVRKAVAARNTDAPIDEILELDSCRRTLSQELDTLRAKRKIIAKQRDEAAIEEGRVLRGRISELETGLSEVEEKLTDRLLRVPNIPDASVPVGKDESENVVLYYRGEKRNFSFTPKPHWELGEALDIIDFDRGIKLSGSRFYILKGEGARLQRALIAFMLDLHTRKHGYTEIYPPYMIKRECLVASGNLPKFADNLYHDAEEDYWWVPTAEAPLTNLHRDEILSVEQLPIHYVAYTACFRREKMSAGKDVRGIKRLHQFDKVELYKYCKPEDSFDELEKMVADAEEIADALKIPYRLKQLVTADISFGSAKSYDIEMYSPGVDEWLEVSSCSNCTDFQGRRANVRFRRTPEAKPEFVHTLNGSGLALPRVMISVIENYQLPDGSIVVPEVLRPFMGVDAIC</sequence>
<gene>
    <name evidence="1" type="primary">serS</name>
    <name type="ordered locus">DET0577</name>
</gene>
<name>SYS_DEHM1</name>
<reference key="1">
    <citation type="journal article" date="2005" name="Science">
        <title>Genome sequence of the PCE-dechlorinating bacterium Dehalococcoides ethenogenes.</title>
        <authorList>
            <person name="Seshadri R."/>
            <person name="Adrian L."/>
            <person name="Fouts D.E."/>
            <person name="Eisen J.A."/>
            <person name="Phillippy A.M."/>
            <person name="Methe B.A."/>
            <person name="Ward N.L."/>
            <person name="Nelson W.C."/>
            <person name="DeBoy R.T."/>
            <person name="Khouri H.M."/>
            <person name="Kolonay J.F."/>
            <person name="Dodson R.J."/>
            <person name="Daugherty S.C."/>
            <person name="Brinkac L.M."/>
            <person name="Sullivan S.A."/>
            <person name="Madupu R."/>
            <person name="Nelson K.E."/>
            <person name="Kang K.H."/>
            <person name="Impraim M."/>
            <person name="Tran K."/>
            <person name="Robinson J.M."/>
            <person name="Forberger H.A."/>
            <person name="Fraser C.M."/>
            <person name="Zinder S.H."/>
            <person name="Heidelberg J.F."/>
        </authorList>
    </citation>
    <scope>NUCLEOTIDE SEQUENCE [LARGE SCALE GENOMIC DNA]</scope>
    <source>
        <strain>ATCC BAA-2266 / KCTC 15142 / 195</strain>
    </source>
</reference>
<organism>
    <name type="scientific">Dehalococcoides mccartyi (strain ATCC BAA-2266 / KCTC 15142 / 195)</name>
    <name type="common">Dehalococcoides ethenogenes (strain 195)</name>
    <dbReference type="NCBI Taxonomy" id="243164"/>
    <lineage>
        <taxon>Bacteria</taxon>
        <taxon>Bacillati</taxon>
        <taxon>Chloroflexota</taxon>
        <taxon>Dehalococcoidia</taxon>
        <taxon>Dehalococcoidales</taxon>
        <taxon>Dehalococcoidaceae</taxon>
        <taxon>Dehalococcoides</taxon>
    </lineage>
</organism>
<keyword id="KW-0030">Aminoacyl-tRNA synthetase</keyword>
<keyword id="KW-0067">ATP-binding</keyword>
<keyword id="KW-0963">Cytoplasm</keyword>
<keyword id="KW-0436">Ligase</keyword>
<keyword id="KW-0547">Nucleotide-binding</keyword>
<keyword id="KW-0648">Protein biosynthesis</keyword>